<comment type="function">
    <text evidence="3 4">Involved in the c-di-AMP-dependent regulation of the bacterial stringent response (PubMed:33619274, PubMed:35130724). Modulates the activities of at least two enzymes under conditions of potassium limitation (PubMed:33619274, PubMed:35130724). Apo-DarB regulates the activity of the GTP pyrophosphokinase RelA by interacting directly with RelA, leading to stimulation of (p)ppGpp synthesis and induction of the stringent response (PubMed:33619274). Apo-DarB also regulates pyruvate carboxylase (PYC) at two levels: directly at the protein level by binding to the enzyme and stimulating the synthesis of oxaloacetate and indirectly, by interaction with RelA, which leads to activation of the stringent response and to the increased expression of the pycA gene (PubMed:35130724). Stimulation of these enzymes by DarB is prevented in the presence of cyclic di-AMP (c-di-AMP) (PubMed:33619274, PubMed:35130724).</text>
</comment>
<comment type="activity regulation">
    <text evidence="2 3 4 5">Binds c-di-AMP (PubMed:31061098, PubMed:33619274, PubMed:35130724, PubMed:35714772). Binding of c-di-AMP to DarB inhibits the interaction with RelA and PYC (PubMed:33619274, PubMed:35130724).</text>
</comment>
<comment type="subunit">
    <text evidence="3 4 5">Homodimer (PubMed:33619274, PubMed:35714772). Forms a homodimer with a parallel, head-to-head assembly of the monomers (PubMed:35714772). Under conditions of potassium starvation and corresponding low c-di-AMP levels, apo-DarB specifically interacts with the N-terminal region of the RelA (PubMed:33619274). Under the same conditions, apo-DarB also specifically interacts with the C-terminal part of the pyruvate carboxylase (PubMed:35130724).</text>
</comment>
<comment type="domain">
    <text evidence="5">No conformational changes occur upon c-di-AMP binding.</text>
</comment>
<protein>
    <recommendedName>
        <fullName evidence="6">Cyclic di-AMP receptor B</fullName>
        <shortName evidence="6">c-di-AMP receptor B</shortName>
    </recommendedName>
    <alternativeName>
        <fullName evidence="7">c-di-AMP receptor protein DarB</fullName>
    </alternativeName>
</protein>
<keyword id="KW-0002">3D-structure</keyword>
<keyword id="KW-0129">CBS domain</keyword>
<keyword id="KW-1185">Reference proteome</keyword>
<proteinExistence type="evidence at protein level"/>
<accession>O31698</accession>
<accession>O31402</accession>
<gene>
    <name evidence="6" type="primary">darB</name>
    <name type="synonym">ykuL</name>
    <name type="ordered locus">BSU14130</name>
</gene>
<dbReference type="EMBL" id="AJ222587">
    <property type="protein sequence ID" value="CAA10875.1"/>
    <property type="molecule type" value="Genomic_DNA"/>
</dbReference>
<dbReference type="EMBL" id="AL009126">
    <property type="protein sequence ID" value="CAB13286.1"/>
    <property type="molecule type" value="Genomic_DNA"/>
</dbReference>
<dbReference type="PIR" id="A69866">
    <property type="entry name" value="A69866"/>
</dbReference>
<dbReference type="RefSeq" id="NP_389296.1">
    <property type="nucleotide sequence ID" value="NC_000964.3"/>
</dbReference>
<dbReference type="PDB" id="1YAV">
    <property type="method" value="X-ray"/>
    <property type="resolution" value="2.10 A"/>
    <property type="chains" value="A/B=3-147"/>
</dbReference>
<dbReference type="PDB" id="6YJ7">
    <property type="method" value="X-ray"/>
    <property type="resolution" value="1.64 A"/>
    <property type="chains" value="A/B=1-147"/>
</dbReference>
<dbReference type="PDB" id="6YJ8">
    <property type="method" value="X-ray"/>
    <property type="resolution" value="1.84 A"/>
    <property type="chains" value="A/B=1-147"/>
</dbReference>
<dbReference type="PDB" id="6YJ9">
    <property type="method" value="X-ray"/>
    <property type="resolution" value="1.50 A"/>
    <property type="chains" value="A/B=1-147"/>
</dbReference>
<dbReference type="PDB" id="6YJA">
    <property type="method" value="X-ray"/>
    <property type="resolution" value="1.70 A"/>
    <property type="chains" value="A/B=1-147"/>
</dbReference>
<dbReference type="PDB" id="8ACU">
    <property type="method" value="X-ray"/>
    <property type="resolution" value="2.97 A"/>
    <property type="chains" value="E/F=1-147"/>
</dbReference>
<dbReference type="PDB" id="8AD6">
    <property type="method" value="X-ray"/>
    <property type="resolution" value="1.52 A"/>
    <property type="chains" value="A/B=1-147"/>
</dbReference>
<dbReference type="PDBsum" id="1YAV"/>
<dbReference type="PDBsum" id="6YJ7"/>
<dbReference type="PDBsum" id="6YJ8"/>
<dbReference type="PDBsum" id="6YJ9"/>
<dbReference type="PDBsum" id="6YJA"/>
<dbReference type="PDBsum" id="8ACU"/>
<dbReference type="PDBsum" id="8AD6"/>
<dbReference type="SMR" id="O31698"/>
<dbReference type="FunCoup" id="O31698">
    <property type="interactions" value="16"/>
</dbReference>
<dbReference type="STRING" id="224308.BSU14130"/>
<dbReference type="PaxDb" id="224308-BSU14130"/>
<dbReference type="EnsemblBacteria" id="CAB13286">
    <property type="protein sequence ID" value="CAB13286"/>
    <property type="gene ID" value="BSU_14130"/>
</dbReference>
<dbReference type="GeneID" id="939199"/>
<dbReference type="KEGG" id="bsu:BSU14130"/>
<dbReference type="PATRIC" id="fig|224308.179.peg.1542"/>
<dbReference type="eggNOG" id="COG0517">
    <property type="taxonomic scope" value="Bacteria"/>
</dbReference>
<dbReference type="InParanoid" id="O31698"/>
<dbReference type="OrthoDB" id="2375431at2"/>
<dbReference type="PhylomeDB" id="O31698"/>
<dbReference type="BioCyc" id="BSUB:BSU14130-MONOMER"/>
<dbReference type="EvolutionaryTrace" id="O31698"/>
<dbReference type="PRO" id="PR:O31698"/>
<dbReference type="Proteomes" id="UP000001570">
    <property type="component" value="Chromosome"/>
</dbReference>
<dbReference type="CDD" id="cd04643">
    <property type="entry name" value="CBS_pair_bac"/>
    <property type="match status" value="1"/>
</dbReference>
<dbReference type="Gene3D" id="3.10.580.10">
    <property type="entry name" value="CBS-domain"/>
    <property type="match status" value="1"/>
</dbReference>
<dbReference type="InterPro" id="IPR048125">
    <property type="entry name" value="CBS_CbpB"/>
</dbReference>
<dbReference type="InterPro" id="IPR046342">
    <property type="entry name" value="CBS_dom_sf"/>
</dbReference>
<dbReference type="InterPro" id="IPR051257">
    <property type="entry name" value="Diverse_CBS-Domain"/>
</dbReference>
<dbReference type="NCBIfam" id="NF041630">
    <property type="entry name" value="CBS_CbpB"/>
    <property type="match status" value="1"/>
</dbReference>
<dbReference type="PANTHER" id="PTHR43080">
    <property type="entry name" value="CBS DOMAIN-CONTAINING PROTEIN CBSX3, MITOCHONDRIAL"/>
    <property type="match status" value="1"/>
</dbReference>
<dbReference type="PANTHER" id="PTHR43080:SF30">
    <property type="entry name" value="CYCLIC DI-AMP RECEPTOR B"/>
    <property type="match status" value="1"/>
</dbReference>
<dbReference type="SUPFAM" id="SSF54631">
    <property type="entry name" value="CBS-domain pair"/>
    <property type="match status" value="1"/>
</dbReference>
<sequence>MISLQSDQLLEATVGQFMIEADKVAHVQVGNNLEHALLVLTKTGYTAIPVLDPSYRLHGLIGTNMIMNSIFGLERIEFEKLDQITVEEVMLTDIPRLHINDPIMKGFGMVINNGFVCVENDEQVFEGIFTRRVVLKELNKHIRSLNK</sequence>
<reference key="1">
    <citation type="submission" date="1997-11" db="EMBL/GenBank/DDBJ databases">
        <title>Sequence of the Bacillus subtilis chromosome from ykuA to cse-15.</title>
        <authorList>
            <person name="Scanlan E."/>
            <person name="Devine K.M."/>
        </authorList>
    </citation>
    <scope>NUCLEOTIDE SEQUENCE [GENOMIC DNA]</scope>
    <source>
        <strain>168</strain>
    </source>
</reference>
<reference key="2">
    <citation type="journal article" date="1997" name="Nature">
        <title>The complete genome sequence of the Gram-positive bacterium Bacillus subtilis.</title>
        <authorList>
            <person name="Kunst F."/>
            <person name="Ogasawara N."/>
            <person name="Moszer I."/>
            <person name="Albertini A.M."/>
            <person name="Alloni G."/>
            <person name="Azevedo V."/>
            <person name="Bertero M.G."/>
            <person name="Bessieres P."/>
            <person name="Bolotin A."/>
            <person name="Borchert S."/>
            <person name="Borriss R."/>
            <person name="Boursier L."/>
            <person name="Brans A."/>
            <person name="Braun M."/>
            <person name="Brignell S.C."/>
            <person name="Bron S."/>
            <person name="Brouillet S."/>
            <person name="Bruschi C.V."/>
            <person name="Caldwell B."/>
            <person name="Capuano V."/>
            <person name="Carter N.M."/>
            <person name="Choi S.-K."/>
            <person name="Codani J.-J."/>
            <person name="Connerton I.F."/>
            <person name="Cummings N.J."/>
            <person name="Daniel R.A."/>
            <person name="Denizot F."/>
            <person name="Devine K.M."/>
            <person name="Duesterhoeft A."/>
            <person name="Ehrlich S.D."/>
            <person name="Emmerson P.T."/>
            <person name="Entian K.-D."/>
            <person name="Errington J."/>
            <person name="Fabret C."/>
            <person name="Ferrari E."/>
            <person name="Foulger D."/>
            <person name="Fritz C."/>
            <person name="Fujita M."/>
            <person name="Fujita Y."/>
            <person name="Fuma S."/>
            <person name="Galizzi A."/>
            <person name="Galleron N."/>
            <person name="Ghim S.-Y."/>
            <person name="Glaser P."/>
            <person name="Goffeau A."/>
            <person name="Golightly E.J."/>
            <person name="Grandi G."/>
            <person name="Guiseppi G."/>
            <person name="Guy B.J."/>
            <person name="Haga K."/>
            <person name="Haiech J."/>
            <person name="Harwood C.R."/>
            <person name="Henaut A."/>
            <person name="Hilbert H."/>
            <person name="Holsappel S."/>
            <person name="Hosono S."/>
            <person name="Hullo M.-F."/>
            <person name="Itaya M."/>
            <person name="Jones L.-M."/>
            <person name="Joris B."/>
            <person name="Karamata D."/>
            <person name="Kasahara Y."/>
            <person name="Klaerr-Blanchard M."/>
            <person name="Klein C."/>
            <person name="Kobayashi Y."/>
            <person name="Koetter P."/>
            <person name="Koningstein G."/>
            <person name="Krogh S."/>
            <person name="Kumano M."/>
            <person name="Kurita K."/>
            <person name="Lapidus A."/>
            <person name="Lardinois S."/>
            <person name="Lauber J."/>
            <person name="Lazarevic V."/>
            <person name="Lee S.-M."/>
            <person name="Levine A."/>
            <person name="Liu H."/>
            <person name="Masuda S."/>
            <person name="Mauel C."/>
            <person name="Medigue C."/>
            <person name="Medina N."/>
            <person name="Mellado R.P."/>
            <person name="Mizuno M."/>
            <person name="Moestl D."/>
            <person name="Nakai S."/>
            <person name="Noback M."/>
            <person name="Noone D."/>
            <person name="O'Reilly M."/>
            <person name="Ogawa K."/>
            <person name="Ogiwara A."/>
            <person name="Oudega B."/>
            <person name="Park S.-H."/>
            <person name="Parro V."/>
            <person name="Pohl T.M."/>
            <person name="Portetelle D."/>
            <person name="Porwollik S."/>
            <person name="Prescott A.M."/>
            <person name="Presecan E."/>
            <person name="Pujic P."/>
            <person name="Purnelle B."/>
            <person name="Rapoport G."/>
            <person name="Rey M."/>
            <person name="Reynolds S."/>
            <person name="Rieger M."/>
            <person name="Rivolta C."/>
            <person name="Rocha E."/>
            <person name="Roche B."/>
            <person name="Rose M."/>
            <person name="Sadaie Y."/>
            <person name="Sato T."/>
            <person name="Scanlan E."/>
            <person name="Schleich S."/>
            <person name="Schroeter R."/>
            <person name="Scoffone F."/>
            <person name="Sekiguchi J."/>
            <person name="Sekowska A."/>
            <person name="Seror S.J."/>
            <person name="Serror P."/>
            <person name="Shin B.-S."/>
            <person name="Soldo B."/>
            <person name="Sorokin A."/>
            <person name="Tacconi E."/>
            <person name="Takagi T."/>
            <person name="Takahashi H."/>
            <person name="Takemaru K."/>
            <person name="Takeuchi M."/>
            <person name="Tamakoshi A."/>
            <person name="Tanaka T."/>
            <person name="Terpstra P."/>
            <person name="Tognoni A."/>
            <person name="Tosato V."/>
            <person name="Uchiyama S."/>
            <person name="Vandenbol M."/>
            <person name="Vannier F."/>
            <person name="Vassarotti A."/>
            <person name="Viari A."/>
            <person name="Wambutt R."/>
            <person name="Wedler E."/>
            <person name="Wedler H."/>
            <person name="Weitzenegger T."/>
            <person name="Winters P."/>
            <person name="Wipat A."/>
            <person name="Yamamoto H."/>
            <person name="Yamane K."/>
            <person name="Yasumoto K."/>
            <person name="Yata K."/>
            <person name="Yoshida K."/>
            <person name="Yoshikawa H.-F."/>
            <person name="Zumstein E."/>
            <person name="Yoshikawa H."/>
            <person name="Danchin A."/>
        </authorList>
    </citation>
    <scope>NUCLEOTIDE SEQUENCE [LARGE SCALE GENOMIC DNA]</scope>
    <source>
        <strain>168</strain>
    </source>
</reference>
<reference key="3">
    <citation type="journal article" date="2019" name="J. Biol. Chem.">
        <title>Sustained sensing in potassium homeostasis: Cyclic di-AMP controls potassium uptake by KimA at the levels of expression and activity.</title>
        <authorList>
            <person name="Gundlach J."/>
            <person name="Krueger L."/>
            <person name="Herzberg C."/>
            <person name="Turdiev A."/>
            <person name="Poehlein A."/>
            <person name="Tascon I."/>
            <person name="Weiss M."/>
            <person name="Hertel D."/>
            <person name="Daniel R."/>
            <person name="Haenelt I."/>
            <person name="Lee V.T."/>
            <person name="Stuelke J."/>
        </authorList>
    </citation>
    <scope>ACTIVITY REGULATION</scope>
    <scope>CYCLIC DI-AMP BINDING</scope>
    <source>
        <strain>168</strain>
    </source>
</reference>
<reference key="4">
    <citation type="journal article" date="2021" name="Nat. Commun.">
        <title>A meet-up of two second messengers: the c-di-AMP receptor DarB controls (p)ppGpp synthesis in Bacillus subtilis.</title>
        <authorList>
            <person name="Krueger L."/>
            <person name="Herzberg C."/>
            <person name="Wicke D."/>
            <person name="Baehre H."/>
            <person name="Heidemann J.L."/>
            <person name="Dickmanns A."/>
            <person name="Schmitt K."/>
            <person name="Ficner R."/>
            <person name="Stuelke J."/>
        </authorList>
    </citation>
    <scope>FUNCTION</scope>
    <scope>ACTIVITY REGULATION</scope>
    <scope>SUBUNIT</scope>
    <scope>INTERACTION WITH RELA</scope>
    <scope>MUTAGENESIS OF ALA-25 AND ARG-132</scope>
</reference>
<reference key="5">
    <citation type="journal article" date="2022" name="MBio">
        <title>Sustained control of pyruvate carboxylase by the essential second messenger cyclic di-AMP in Bacillus subtilis.</title>
        <authorList>
            <person name="Krueger L."/>
            <person name="Herzberg C."/>
            <person name="Wicke D."/>
            <person name="Scholz P."/>
            <person name="Schmitt K."/>
            <person name="Turdiev A."/>
            <person name="Lee V.T."/>
            <person name="Ischebeck T."/>
            <person name="Stuelke J."/>
        </authorList>
    </citation>
    <scope>FUNCTION</scope>
    <scope>ACTIVITY REGULATION</scope>
    <scope>INTERACTION WITH PYC</scope>
    <scope>MUTAGENESIS OF LEU-38</scope>
    <source>
        <strain>168</strain>
    </source>
</reference>
<reference evidence="9" key="6">
    <citation type="submission" date="2005-01" db="PDB data bank">
        <title>Crystal structure of a hypothetical protein (ykuL) containing CBS domains from Bacillus subtilis.</title>
        <authorList>
            <consortium name="New York structural genomix research consortium (NYSGXRC)"/>
        </authorList>
    </citation>
    <scope>X-RAY CRYSTALLOGRAPHY (2.10 ANGSTROMS) OF 3-147</scope>
</reference>
<reference evidence="10 11 12 13" key="7">
    <citation type="journal article" date="2022" name="J. Biol. Chem.">
        <title>Structural basis for c-di-AMP-dependent regulation of the bacterial stringent response by receptor protein DarB.</title>
        <authorList>
            <person name="Heidemann J.L."/>
            <person name="Neumann P."/>
            <person name="Krueger L."/>
            <person name="Wicke D."/>
            <person name="Vinhoven L."/>
            <person name="Linden A."/>
            <person name="Dickmanns A."/>
            <person name="Stuelke J."/>
            <person name="Urlaub H."/>
            <person name="Ficner R."/>
        </authorList>
    </citation>
    <scope>X-RAY CRYSTALLOGRAPHY (1.50 ANGSTROMS) OF APO-PROTEIN AND IN COMPLEXES WITH C-DI-AMP; CYCLIC GMP-AMP AND AMP</scope>
    <scope>ACTIVITY REGULATION</scope>
    <scope>SUBUNIT</scope>
    <scope>DOMAIN</scope>
</reference>
<evidence type="ECO:0000255" key="1">
    <source>
        <dbReference type="PROSITE-ProRule" id="PRU00703"/>
    </source>
</evidence>
<evidence type="ECO:0000269" key="2">
    <source>
    </source>
</evidence>
<evidence type="ECO:0000269" key="3">
    <source>
    </source>
</evidence>
<evidence type="ECO:0000269" key="4">
    <source>
    </source>
</evidence>
<evidence type="ECO:0000269" key="5">
    <source>
    </source>
</evidence>
<evidence type="ECO:0000303" key="6">
    <source>
    </source>
</evidence>
<evidence type="ECO:0000303" key="7">
    <source>
    </source>
</evidence>
<evidence type="ECO:0000305" key="8"/>
<evidence type="ECO:0007744" key="9">
    <source>
        <dbReference type="PDB" id="1YAV"/>
    </source>
</evidence>
<evidence type="ECO:0007744" key="10">
    <source>
        <dbReference type="PDB" id="6YJ7"/>
    </source>
</evidence>
<evidence type="ECO:0007744" key="11">
    <source>
        <dbReference type="PDB" id="6YJ8"/>
    </source>
</evidence>
<evidence type="ECO:0007744" key="12">
    <source>
        <dbReference type="PDB" id="6YJ9"/>
    </source>
</evidence>
<evidence type="ECO:0007744" key="13">
    <source>
        <dbReference type="PDB" id="6YJA"/>
    </source>
</evidence>
<evidence type="ECO:0007829" key="14">
    <source>
        <dbReference type="PDB" id="6YJ9"/>
    </source>
</evidence>
<organism>
    <name type="scientific">Bacillus subtilis (strain 168)</name>
    <dbReference type="NCBI Taxonomy" id="224308"/>
    <lineage>
        <taxon>Bacteria</taxon>
        <taxon>Bacillati</taxon>
        <taxon>Bacillota</taxon>
        <taxon>Bacilli</taxon>
        <taxon>Bacillales</taxon>
        <taxon>Bacillaceae</taxon>
        <taxon>Bacillus</taxon>
    </lineage>
</organism>
<feature type="chain" id="PRO_0000360536" description="Cyclic di-AMP receptor B">
    <location>
        <begin position="1"/>
        <end position="147"/>
    </location>
</feature>
<feature type="domain" description="CBS" evidence="1">
    <location>
        <begin position="18"/>
        <end position="78"/>
    </location>
</feature>
<feature type="binding site" evidence="5 13">
    <location>
        <position position="23"/>
    </location>
    <ligand>
        <name>3',3'-c-di-AMP</name>
        <dbReference type="ChEBI" id="CHEBI:71500"/>
    </ligand>
</feature>
<feature type="binding site" evidence="5 13">
    <location>
        <position position="25"/>
    </location>
    <ligand>
        <name>3',3'-c-di-AMP</name>
        <dbReference type="ChEBI" id="CHEBI:71500"/>
    </ligand>
</feature>
<feature type="binding site" evidence="5 13">
    <location>
        <position position="46"/>
    </location>
    <ligand>
        <name>3',3'-c-di-AMP</name>
        <dbReference type="ChEBI" id="CHEBI:71500"/>
    </ligand>
</feature>
<feature type="binding site" evidence="5 13">
    <location>
        <position position="47"/>
    </location>
    <ligand>
        <name>3',3'-c-di-AMP</name>
        <dbReference type="ChEBI" id="CHEBI:71500"/>
    </ligand>
</feature>
<feature type="binding site" evidence="5 13">
    <location>
        <position position="131"/>
    </location>
    <ligand>
        <name>3',3'-c-di-AMP</name>
        <dbReference type="ChEBI" id="CHEBI:71500"/>
    </ligand>
</feature>
<feature type="mutagenesis site" description="Binds c-di-AMP, but interaction with RelA is weakened and not affected by c-di-AMP; when associated with M-132." evidence="3">
    <original>A</original>
    <variation>G</variation>
    <location>
        <position position="25"/>
    </location>
</feature>
<feature type="mutagenesis site" description="Binds c-di-AMP. Abolishes the ability to bind RelA. Is still able to bind PYC, but cannot activate it." evidence="4">
    <original>L</original>
    <variation>F</variation>
    <location>
        <position position="38"/>
    </location>
</feature>
<feature type="mutagenesis site" description="Binds c-di-AMP, but interaction with RelA is weakened and not affected by c-di-AMP; when associated with G-25." evidence="3">
    <original>R</original>
    <variation>M</variation>
    <location>
        <position position="132"/>
    </location>
</feature>
<feature type="sequence conflict" description="In Ref. 1; CAA10875." evidence="8" ref="1">
    <original>I</original>
    <variation>T</variation>
    <location>
        <position position="48"/>
    </location>
</feature>
<feature type="helix" evidence="14">
    <location>
        <begin position="6"/>
        <end position="11"/>
    </location>
</feature>
<feature type="helix" evidence="14">
    <location>
        <begin position="14"/>
        <end position="16"/>
    </location>
</feature>
<feature type="strand" evidence="14">
    <location>
        <begin position="18"/>
        <end position="20"/>
    </location>
</feature>
<feature type="helix" evidence="14">
    <location>
        <begin position="21"/>
        <end position="23"/>
    </location>
</feature>
<feature type="helix" evidence="14">
    <location>
        <begin position="33"/>
        <end position="43"/>
    </location>
</feature>
<feature type="strand" evidence="14">
    <location>
        <begin position="46"/>
        <end position="51"/>
    </location>
</feature>
<feature type="strand" evidence="14">
    <location>
        <begin position="56"/>
        <end position="62"/>
    </location>
</feature>
<feature type="helix" evidence="14">
    <location>
        <begin position="63"/>
        <end position="70"/>
    </location>
</feature>
<feature type="strand" evidence="14">
    <location>
        <begin position="73"/>
        <end position="76"/>
    </location>
</feature>
<feature type="helix" evidence="14">
    <location>
        <begin position="78"/>
        <end position="80"/>
    </location>
</feature>
<feature type="turn" evidence="14">
    <location>
        <begin position="81"/>
        <end position="83"/>
    </location>
</feature>
<feature type="helix" evidence="14">
    <location>
        <begin position="86"/>
        <end position="89"/>
    </location>
</feature>
<feature type="strand" evidence="14">
    <location>
        <begin position="96"/>
        <end position="98"/>
    </location>
</feature>
<feature type="helix" evidence="14">
    <location>
        <begin position="103"/>
        <end position="109"/>
    </location>
</feature>
<feature type="turn" evidence="14">
    <location>
        <begin position="110"/>
        <end position="112"/>
    </location>
</feature>
<feature type="strand" evidence="14">
    <location>
        <begin position="114"/>
        <end position="119"/>
    </location>
</feature>
<feature type="helix" evidence="14">
    <location>
        <begin position="121"/>
        <end position="123"/>
    </location>
</feature>
<feature type="strand" evidence="14">
    <location>
        <begin position="124"/>
        <end position="130"/>
    </location>
</feature>
<feature type="helix" evidence="14">
    <location>
        <begin position="131"/>
        <end position="144"/>
    </location>
</feature>
<name>DARB_BACSU</name>